<sequence length="649" mass="72673">MPLGQRAGDKSESRYCGVEVLDFPAGEELPAVLSHSLSSSFDFLLAPLVDPDYRPTPGSVLPVAASDLVLGPAQWSSHIVGKISEWIDLDAEDEQLRLDSEITLKQEIAWASHLSLQACVLPPPKRSSCANYARVVNHILQGLTNLQLWLRIPLEKSEPMDEDHDGAKDNSDMSDTVDSWEWWNSFRLLCEHSSQLCVALDVLSTLPSMNSLGRWFGEPVRAAILQTNAFLTNARGYPCLSKRHQKLLTGFFNHSVQVIISGRSNHNVSQGGVLSGDENHTEDTAVRHALSPYLDYIAYIYQRMDPLPEQERFEINYRDFLQSPLQPLMDNLEAQTYETFEKDTVKYTQYQRAIAKALVDRVSDDDVSTTKTVLMVVGAGRGPLVRASLQAAEETGRKLKVYAVEKNPNAVITLHSLIKLEGWESLVTIISSDMRCWEAPEKADILVSELLGSFGDNELSPECLDGAQRFLKPDGISIPSSYTSFIEPITASKLHNDIKAHKDIAHFETAYVVKLHRIARLAPTQSVFTFDHPNPSPNASNQRYTKLKFEIPQETGSCLVHGFAGYFDAVLYKDVHLGIEPNTATPNMFSWFPIFFPLRKPIYVPSKTPIEVHFWRCCGATKVWYEWAVTAPSPSPIHNSNGRSYWVGL</sequence>
<keyword id="KW-0963">Cytoplasm</keyword>
<keyword id="KW-0489">Methyltransferase</keyword>
<keyword id="KW-1185">Reference proteome</keyword>
<keyword id="KW-0949">S-adenosyl-L-methionine</keyword>
<keyword id="KW-0808">Transferase</keyword>
<reference key="1">
    <citation type="journal article" date="2005" name="Nature">
        <title>The map-based sequence of the rice genome.</title>
        <authorList>
            <consortium name="International rice genome sequencing project (IRGSP)"/>
        </authorList>
    </citation>
    <scope>NUCLEOTIDE SEQUENCE [LARGE SCALE GENOMIC DNA]</scope>
    <source>
        <strain>cv. Nipponbare</strain>
    </source>
</reference>
<reference key="2">
    <citation type="journal article" date="2008" name="Nucleic Acids Res.">
        <title>The rice annotation project database (RAP-DB): 2008 update.</title>
        <authorList>
            <consortium name="The rice annotation project (RAP)"/>
        </authorList>
    </citation>
    <scope>GENOME REANNOTATION</scope>
    <source>
        <strain>cv. Nipponbare</strain>
    </source>
</reference>
<reference key="3">
    <citation type="journal article" date="2013" name="Rice">
        <title>Improvement of the Oryza sativa Nipponbare reference genome using next generation sequence and optical map data.</title>
        <authorList>
            <person name="Kawahara Y."/>
            <person name="de la Bastide M."/>
            <person name="Hamilton J.P."/>
            <person name="Kanamori H."/>
            <person name="McCombie W.R."/>
            <person name="Ouyang S."/>
            <person name="Schwartz D.C."/>
            <person name="Tanaka T."/>
            <person name="Wu J."/>
            <person name="Zhou S."/>
            <person name="Childs K.L."/>
            <person name="Davidson R.M."/>
            <person name="Lin H."/>
            <person name="Quesada-Ocampo L."/>
            <person name="Vaillancourt B."/>
            <person name="Sakai H."/>
            <person name="Lee S.S."/>
            <person name="Kim J."/>
            <person name="Numa H."/>
            <person name="Itoh T."/>
            <person name="Buell C.R."/>
            <person name="Matsumoto T."/>
        </authorList>
    </citation>
    <scope>GENOME REANNOTATION</scope>
    <source>
        <strain>cv. Nipponbare</strain>
    </source>
</reference>
<reference key="4">
    <citation type="journal article" date="2005" name="PLoS Biol.">
        <title>The genomes of Oryza sativa: a history of duplications.</title>
        <authorList>
            <person name="Yu J."/>
            <person name="Wang J."/>
            <person name="Lin W."/>
            <person name="Li S."/>
            <person name="Li H."/>
            <person name="Zhou J."/>
            <person name="Ni P."/>
            <person name="Dong W."/>
            <person name="Hu S."/>
            <person name="Zeng C."/>
            <person name="Zhang J."/>
            <person name="Zhang Y."/>
            <person name="Li R."/>
            <person name="Xu Z."/>
            <person name="Li S."/>
            <person name="Li X."/>
            <person name="Zheng H."/>
            <person name="Cong L."/>
            <person name="Lin L."/>
            <person name="Yin J."/>
            <person name="Geng J."/>
            <person name="Li G."/>
            <person name="Shi J."/>
            <person name="Liu J."/>
            <person name="Lv H."/>
            <person name="Li J."/>
            <person name="Wang J."/>
            <person name="Deng Y."/>
            <person name="Ran L."/>
            <person name="Shi X."/>
            <person name="Wang X."/>
            <person name="Wu Q."/>
            <person name="Li C."/>
            <person name="Ren X."/>
            <person name="Wang J."/>
            <person name="Wang X."/>
            <person name="Li D."/>
            <person name="Liu D."/>
            <person name="Zhang X."/>
            <person name="Ji Z."/>
            <person name="Zhao W."/>
            <person name="Sun Y."/>
            <person name="Zhang Z."/>
            <person name="Bao J."/>
            <person name="Han Y."/>
            <person name="Dong L."/>
            <person name="Ji J."/>
            <person name="Chen P."/>
            <person name="Wu S."/>
            <person name="Liu J."/>
            <person name="Xiao Y."/>
            <person name="Bu D."/>
            <person name="Tan J."/>
            <person name="Yang L."/>
            <person name="Ye C."/>
            <person name="Zhang J."/>
            <person name="Xu J."/>
            <person name="Zhou Y."/>
            <person name="Yu Y."/>
            <person name="Zhang B."/>
            <person name="Zhuang S."/>
            <person name="Wei H."/>
            <person name="Liu B."/>
            <person name="Lei M."/>
            <person name="Yu H."/>
            <person name="Li Y."/>
            <person name="Xu H."/>
            <person name="Wei S."/>
            <person name="He X."/>
            <person name="Fang L."/>
            <person name="Zhang Z."/>
            <person name="Zhang Y."/>
            <person name="Huang X."/>
            <person name="Su Z."/>
            <person name="Tong W."/>
            <person name="Li J."/>
            <person name="Tong Z."/>
            <person name="Li S."/>
            <person name="Ye J."/>
            <person name="Wang L."/>
            <person name="Fang L."/>
            <person name="Lei T."/>
            <person name="Chen C.-S."/>
            <person name="Chen H.-C."/>
            <person name="Xu Z."/>
            <person name="Li H."/>
            <person name="Huang H."/>
            <person name="Zhang F."/>
            <person name="Xu H."/>
            <person name="Li N."/>
            <person name="Zhao C."/>
            <person name="Li S."/>
            <person name="Dong L."/>
            <person name="Huang Y."/>
            <person name="Li L."/>
            <person name="Xi Y."/>
            <person name="Qi Q."/>
            <person name="Li W."/>
            <person name="Zhang B."/>
            <person name="Hu W."/>
            <person name="Zhang Y."/>
            <person name="Tian X."/>
            <person name="Jiao Y."/>
            <person name="Liang X."/>
            <person name="Jin J."/>
            <person name="Gao L."/>
            <person name="Zheng W."/>
            <person name="Hao B."/>
            <person name="Liu S.-M."/>
            <person name="Wang W."/>
            <person name="Yuan L."/>
            <person name="Cao M."/>
            <person name="McDermott J."/>
            <person name="Samudrala R."/>
            <person name="Wang J."/>
            <person name="Wong G.K.-S."/>
            <person name="Yang H."/>
        </authorList>
    </citation>
    <scope>NUCLEOTIDE SEQUENCE [LARGE SCALE GENOMIC DNA]</scope>
    <source>
        <strain>cv. Nipponbare</strain>
    </source>
</reference>
<reference key="5">
    <citation type="journal article" date="2003" name="Science">
        <title>Collection, mapping, and annotation of over 28,000 cDNA clones from japonica rice.</title>
        <authorList>
            <consortium name="The rice full-length cDNA consortium"/>
        </authorList>
    </citation>
    <scope>NUCLEOTIDE SEQUENCE [LARGE SCALE MRNA]</scope>
    <source>
        <strain>cv. Nipponbare</strain>
    </source>
</reference>
<organism>
    <name type="scientific">Oryza sativa subsp. japonica</name>
    <name type="common">Rice</name>
    <dbReference type="NCBI Taxonomy" id="39947"/>
    <lineage>
        <taxon>Eukaryota</taxon>
        <taxon>Viridiplantae</taxon>
        <taxon>Streptophyta</taxon>
        <taxon>Embryophyta</taxon>
        <taxon>Tracheophyta</taxon>
        <taxon>Spermatophyta</taxon>
        <taxon>Magnoliopsida</taxon>
        <taxon>Liliopsida</taxon>
        <taxon>Poales</taxon>
        <taxon>Poaceae</taxon>
        <taxon>BOP clade</taxon>
        <taxon>Oryzoideae</taxon>
        <taxon>Oryzeae</taxon>
        <taxon>Oryzinae</taxon>
        <taxon>Oryza</taxon>
        <taxon>Oryza sativa</taxon>
    </lineage>
</organism>
<evidence type="ECO:0000250" key="1"/>
<evidence type="ECO:0000250" key="2">
    <source>
        <dbReference type="UniProtKB" id="O14744"/>
    </source>
</evidence>
<evidence type="ECO:0000255" key="3">
    <source>
        <dbReference type="PROSITE-ProRule" id="PRU01015"/>
    </source>
</evidence>
<proteinExistence type="evidence at transcript level"/>
<feature type="chain" id="PRO_0000293995" description="Protein arginine N-methyltransferase 5">
    <location>
        <begin position="1"/>
        <end position="649"/>
    </location>
</feature>
<feature type="domain" description="SAM-dependent MTase PRMT-type" evidence="3">
    <location>
        <begin position="321"/>
        <end position="627"/>
    </location>
</feature>
<feature type="region of interest" description="TIM barrel" evidence="1">
    <location>
        <begin position="10"/>
        <end position="300"/>
    </location>
</feature>
<feature type="region of interest" description="Beta barrel" evidence="1">
    <location>
        <begin position="479"/>
        <end position="649"/>
    </location>
</feature>
<feature type="region of interest" description="Dimerization" evidence="1">
    <location>
        <begin position="491"/>
        <end position="507"/>
    </location>
</feature>
<feature type="active site" description="Proton donor/acceptor" evidence="1">
    <location>
        <position position="449"/>
    </location>
</feature>
<feature type="active site" description="Proton donor/acceptor" evidence="1">
    <location>
        <position position="458"/>
    </location>
</feature>
<feature type="binding site" evidence="1">
    <location>
        <position position="337"/>
    </location>
    <ligand>
        <name>S-adenosyl-L-methionine</name>
        <dbReference type="ChEBI" id="CHEBI:59789"/>
    </ligand>
</feature>
<feature type="binding site" evidence="2">
    <location>
        <position position="340"/>
    </location>
    <ligand>
        <name>a protein</name>
        <dbReference type="ChEBI" id="CHEBI:16541"/>
        <note>substrate</note>
    </ligand>
    <ligandPart>
        <name>L-arginine residue</name>
        <dbReference type="ChEBI" id="CHEBI:29965"/>
    </ligandPart>
</feature>
<feature type="binding site" evidence="1">
    <location>
        <begin position="346"/>
        <end position="347"/>
    </location>
    <ligand>
        <name>S-adenosyl-L-methionine</name>
        <dbReference type="ChEBI" id="CHEBI:59789"/>
    </ligand>
</feature>
<feature type="binding site" evidence="1">
    <location>
        <position position="405"/>
    </location>
    <ligand>
        <name>S-adenosyl-L-methionine</name>
        <dbReference type="ChEBI" id="CHEBI:59789"/>
    </ligand>
</feature>
<feature type="binding site" evidence="1">
    <location>
        <begin position="433"/>
        <end position="434"/>
    </location>
    <ligand>
        <name>S-adenosyl-L-methionine</name>
        <dbReference type="ChEBI" id="CHEBI:59789"/>
    </ligand>
</feature>
<feature type="binding site" evidence="2">
    <location>
        <position position="449"/>
    </location>
    <ligand>
        <name>a protein</name>
        <dbReference type="ChEBI" id="CHEBI:16541"/>
        <note>substrate</note>
    </ligand>
    <ligandPart>
        <name>L-arginine residue</name>
        <dbReference type="ChEBI" id="CHEBI:29965"/>
    </ligandPart>
</feature>
<feature type="binding site" evidence="2">
    <location>
        <position position="458"/>
    </location>
    <ligand>
        <name>a protein</name>
        <dbReference type="ChEBI" id="CHEBI:16541"/>
        <note>substrate</note>
    </ligand>
    <ligandPart>
        <name>L-arginine residue</name>
        <dbReference type="ChEBI" id="CHEBI:29965"/>
    </ligandPart>
</feature>
<feature type="site" description="Critical for specifying symmetric addition of methyl groups" evidence="1">
    <location>
        <position position="340"/>
    </location>
</feature>
<dbReference type="EC" id="2.1.1.320"/>
<dbReference type="EMBL" id="AP005294">
    <property type="protein sequence ID" value="BAD10250.1"/>
    <property type="molecule type" value="Genomic_DNA"/>
</dbReference>
<dbReference type="EMBL" id="AP005647">
    <property type="protein sequence ID" value="BAD10543.1"/>
    <property type="molecule type" value="Genomic_DNA"/>
</dbReference>
<dbReference type="EMBL" id="AP008208">
    <property type="protein sequence ID" value="BAF07757.1"/>
    <property type="molecule type" value="Genomic_DNA"/>
</dbReference>
<dbReference type="EMBL" id="AP014958">
    <property type="protein sequence ID" value="BAS76901.1"/>
    <property type="molecule type" value="Genomic_DNA"/>
</dbReference>
<dbReference type="EMBL" id="CM000139">
    <property type="status" value="NOT_ANNOTATED_CDS"/>
    <property type="molecule type" value="Genomic_DNA"/>
</dbReference>
<dbReference type="EMBL" id="AK073412">
    <property type="protein sequence ID" value="BAG93445.1"/>
    <property type="molecule type" value="mRNA"/>
</dbReference>
<dbReference type="EMBL" id="AK103804">
    <property type="protein sequence ID" value="BAG96268.1"/>
    <property type="molecule type" value="mRNA"/>
</dbReference>
<dbReference type="RefSeq" id="XP_015627032.1">
    <property type="nucleotide sequence ID" value="XM_015771546.1"/>
</dbReference>
<dbReference type="SMR" id="Q6YXZ7"/>
<dbReference type="FunCoup" id="Q6YXZ7">
    <property type="interactions" value="3093"/>
</dbReference>
<dbReference type="STRING" id="39947.Q6YXZ7"/>
<dbReference type="PaxDb" id="39947-Q6YXZ7"/>
<dbReference type="EnsemblPlants" id="Os02t0139200-01">
    <property type="protein sequence ID" value="Os02t0139200-01"/>
    <property type="gene ID" value="Os02g0139200"/>
</dbReference>
<dbReference type="Gramene" id="Os02t0139200-01">
    <property type="protein sequence ID" value="Os02t0139200-01"/>
    <property type="gene ID" value="Os02g0139200"/>
</dbReference>
<dbReference type="KEGG" id="dosa:Os02g0139200"/>
<dbReference type="eggNOG" id="KOG0822">
    <property type="taxonomic scope" value="Eukaryota"/>
</dbReference>
<dbReference type="HOGENOM" id="CLU_010247_3_0_1"/>
<dbReference type="InParanoid" id="Q6YXZ7"/>
<dbReference type="OMA" id="IKYAWYE"/>
<dbReference type="OrthoDB" id="1368803at2759"/>
<dbReference type="Proteomes" id="UP000000763">
    <property type="component" value="Chromosome 2"/>
</dbReference>
<dbReference type="Proteomes" id="UP000007752">
    <property type="component" value="Chromosome 2"/>
</dbReference>
<dbReference type="Proteomes" id="UP000059680">
    <property type="component" value="Chromosome 2"/>
</dbReference>
<dbReference type="GO" id="GO:0005829">
    <property type="term" value="C:cytosol"/>
    <property type="evidence" value="ECO:0000318"/>
    <property type="project" value="GO_Central"/>
</dbReference>
<dbReference type="GO" id="GO:0005634">
    <property type="term" value="C:nucleus"/>
    <property type="evidence" value="ECO:0000318"/>
    <property type="project" value="GO_Central"/>
</dbReference>
<dbReference type="GO" id="GO:0008469">
    <property type="term" value="F:histone arginine N-methyltransferase activity"/>
    <property type="evidence" value="ECO:0000318"/>
    <property type="project" value="GO_Central"/>
</dbReference>
<dbReference type="GO" id="GO:0035243">
    <property type="term" value="F:protein-arginine omega-N symmetric methyltransferase activity"/>
    <property type="evidence" value="ECO:0007669"/>
    <property type="project" value="UniProtKB-EC"/>
</dbReference>
<dbReference type="GO" id="GO:0032259">
    <property type="term" value="P:methylation"/>
    <property type="evidence" value="ECO:0007669"/>
    <property type="project" value="UniProtKB-KW"/>
</dbReference>
<dbReference type="GO" id="GO:0006355">
    <property type="term" value="P:regulation of DNA-templated transcription"/>
    <property type="evidence" value="ECO:0000318"/>
    <property type="project" value="GO_Central"/>
</dbReference>
<dbReference type="FunFam" id="3.20.20.150:FF:000016">
    <property type="entry name" value="Protein arginine N-methyltransferase"/>
    <property type="match status" value="1"/>
</dbReference>
<dbReference type="FunFam" id="2.70.160.11:FF:000003">
    <property type="entry name" value="Protein arginine N-methyltransferase 5"/>
    <property type="match status" value="1"/>
</dbReference>
<dbReference type="FunFam" id="3.40.50.150:FF:000029">
    <property type="entry name" value="Protein arginine N-methyltransferase 5"/>
    <property type="match status" value="1"/>
</dbReference>
<dbReference type="Gene3D" id="3.20.20.150">
    <property type="entry name" value="Divalent-metal-dependent TIM barrel enzymes"/>
    <property type="match status" value="1"/>
</dbReference>
<dbReference type="Gene3D" id="2.70.160.11">
    <property type="entry name" value="Hnrnp arginine n-methyltransferase1"/>
    <property type="match status" value="1"/>
</dbReference>
<dbReference type="Gene3D" id="3.40.50.150">
    <property type="entry name" value="Vaccinia Virus protein VP39"/>
    <property type="match status" value="1"/>
</dbReference>
<dbReference type="InterPro" id="IPR025799">
    <property type="entry name" value="Arg_MeTrfase"/>
</dbReference>
<dbReference type="InterPro" id="IPR007857">
    <property type="entry name" value="Arg_MeTrfase_PRMT5"/>
</dbReference>
<dbReference type="InterPro" id="IPR035075">
    <property type="entry name" value="PRMT5"/>
</dbReference>
<dbReference type="InterPro" id="IPR035248">
    <property type="entry name" value="PRMT5_C"/>
</dbReference>
<dbReference type="InterPro" id="IPR035247">
    <property type="entry name" value="PRMT5_TIM"/>
</dbReference>
<dbReference type="InterPro" id="IPR029063">
    <property type="entry name" value="SAM-dependent_MTases_sf"/>
</dbReference>
<dbReference type="PANTHER" id="PTHR10738">
    <property type="entry name" value="PROTEIN ARGININE N-METHYLTRANSFERASE 5"/>
    <property type="match status" value="1"/>
</dbReference>
<dbReference type="PANTHER" id="PTHR10738:SF0">
    <property type="entry name" value="PROTEIN ARGININE N-METHYLTRANSFERASE 5"/>
    <property type="match status" value="1"/>
</dbReference>
<dbReference type="Pfam" id="PF05185">
    <property type="entry name" value="PRMT5"/>
    <property type="match status" value="1"/>
</dbReference>
<dbReference type="Pfam" id="PF17286">
    <property type="entry name" value="PRMT5_C"/>
    <property type="match status" value="1"/>
</dbReference>
<dbReference type="Pfam" id="PF17285">
    <property type="entry name" value="PRMT5_TIM"/>
    <property type="match status" value="1"/>
</dbReference>
<dbReference type="PIRSF" id="PIRSF015894">
    <property type="entry name" value="Skb1_MeTrfase"/>
    <property type="match status" value="1"/>
</dbReference>
<dbReference type="SUPFAM" id="SSF53335">
    <property type="entry name" value="S-adenosyl-L-methionine-dependent methyltransferases"/>
    <property type="match status" value="1"/>
</dbReference>
<dbReference type="PROSITE" id="PS51678">
    <property type="entry name" value="SAM_MT_PRMT"/>
    <property type="match status" value="1"/>
</dbReference>
<protein>
    <recommendedName>
        <fullName>Protein arginine N-methyltransferase 5</fullName>
        <ecNumber>2.1.1.320</ecNumber>
    </recommendedName>
    <alternativeName>
        <fullName>Shk1 kinase-binding protein 1 homolog</fullName>
    </alternativeName>
</protein>
<comment type="function">
    <text evidence="1">Methylates arginine residues in proteins such as histone H4.</text>
</comment>
<comment type="catalytic activity">
    <reaction>
        <text>L-arginyl-[protein] + 2 S-adenosyl-L-methionine = N(omega),N(omega)'-dimethyl-L-arginyl-[protein] + 2 S-adenosyl-L-homocysteine + 2 H(+)</text>
        <dbReference type="Rhea" id="RHEA:48108"/>
        <dbReference type="Rhea" id="RHEA-COMP:10532"/>
        <dbReference type="Rhea" id="RHEA-COMP:11992"/>
        <dbReference type="ChEBI" id="CHEBI:15378"/>
        <dbReference type="ChEBI" id="CHEBI:29965"/>
        <dbReference type="ChEBI" id="CHEBI:57856"/>
        <dbReference type="ChEBI" id="CHEBI:59789"/>
        <dbReference type="ChEBI" id="CHEBI:88221"/>
        <dbReference type="EC" id="2.1.1.320"/>
    </reaction>
</comment>
<comment type="subcellular location">
    <subcellularLocation>
        <location evidence="1">Cytoplasm</location>
    </subcellularLocation>
</comment>
<comment type="similarity">
    <text evidence="3">Belongs to the class I-like SAM-binding methyltransferase superfamily. Protein arginine N-methyltransferase family.</text>
</comment>
<gene>
    <name type="primary">PRMT5</name>
    <name type="synonym">SKB1</name>
    <name type="ordered locus">Os02g0139200</name>
    <name type="ordered locus">LOC_Os02g04660</name>
    <name type="ORF">OJ1679_B08.2</name>
    <name type="ORF">OsJ_005168</name>
    <name type="ORF">OSJNBa0026E05.36</name>
</gene>
<accession>Q6YXZ7</accession>
<accession>A3A2Z6</accession>
<accession>B7EM48</accession>
<name>ANM5_ORYSJ</name>